<reference key="1">
    <citation type="journal article" date="1988" name="Cell">
        <title>Posterior pattern formation in C. elegans involves position-specific expression of a gene containing a homeobox.</title>
        <authorList>
            <person name="Costa M."/>
            <person name="Wir M."/>
            <person name="Coulson A."/>
            <person name="Sulston J."/>
            <person name="Kenyon C."/>
        </authorList>
    </citation>
    <scope>NUCLEOTIDE SEQUENCE [MRNA]</scope>
    <scope>FUNCTION</scope>
</reference>
<reference key="2">
    <citation type="submission" date="2000-06" db="EMBL/GenBank/DDBJ databases">
        <title>Determination of 5'-end of Caenorhabditis elegans mab-5 cDNA demonstrates a shorter N-terminal region than previously predicted.</title>
        <authorList>
            <person name="Grandien K."/>
            <person name="Sommer R.J."/>
        </authorList>
    </citation>
    <scope>NUCLEOTIDE SEQUENCE [MRNA]</scope>
</reference>
<reference key="3">
    <citation type="journal article" date="1994" name="Nature">
        <title>2.2 Mb of contiguous nucleotide sequence from chromosome III of C. elegans.</title>
        <authorList>
            <person name="Wilson R."/>
            <person name="Ainscough R."/>
            <person name="Anderson K."/>
            <person name="Baynes C."/>
            <person name="Berks M."/>
            <person name="Bonfield J."/>
            <person name="Burton J."/>
            <person name="Connell M."/>
            <person name="Copsey T."/>
            <person name="Cooper J."/>
            <person name="Coulson A."/>
            <person name="Craxton M."/>
            <person name="Dear S."/>
            <person name="Du Z."/>
            <person name="Durbin R."/>
            <person name="Favello A."/>
            <person name="Fraser A."/>
            <person name="Fulton L."/>
            <person name="Gardner A."/>
            <person name="Green P."/>
            <person name="Hawkins T."/>
            <person name="Hillier L."/>
            <person name="Jier M."/>
            <person name="Johnston L."/>
            <person name="Jones M."/>
            <person name="Kershaw J."/>
            <person name="Kirsten J."/>
            <person name="Laisster N."/>
            <person name="Latreille P."/>
            <person name="Lightning J."/>
            <person name="Lloyd C."/>
            <person name="Mortimore B."/>
            <person name="O'Callaghan M."/>
            <person name="Parsons J."/>
            <person name="Percy C."/>
            <person name="Rifken L."/>
            <person name="Roopra A."/>
            <person name="Saunders D."/>
            <person name="Shownkeen R."/>
            <person name="Sims M."/>
            <person name="Smaldon N."/>
            <person name="Smith A."/>
            <person name="Smith M."/>
            <person name="Sonnhammer E."/>
            <person name="Staden R."/>
            <person name="Sulston J."/>
            <person name="Thierry-Mieg J."/>
            <person name="Thomas K."/>
            <person name="Vaudin M."/>
            <person name="Vaughan K."/>
            <person name="Waterston R."/>
            <person name="Watson A."/>
            <person name="Weinstock L."/>
            <person name="Wilkinson-Sproat J."/>
            <person name="Wohldman P."/>
        </authorList>
    </citation>
    <scope>NUCLEOTIDE SEQUENCE [LARGE SCALE GENOMIC DNA]</scope>
    <source>
        <strain>Bristol N2</strain>
    </source>
</reference>
<reference key="4">
    <citation type="journal article" date="1998" name="Science">
        <title>Genome sequence of the nematode C. elegans: a platform for investigating biology.</title>
        <authorList>
            <consortium name="The C. elegans sequencing consortium"/>
        </authorList>
    </citation>
    <scope>NUCLEOTIDE SEQUENCE [LARGE SCALE GENOMIC DNA]</scope>
    <source>
        <strain>Bristol N2</strain>
    </source>
</reference>
<reference key="5">
    <citation type="journal article" date="1996" name="Development">
        <title>Neuronal cell migration in C. elegans: regulation of Hox gene expression and cell position.</title>
        <authorList>
            <person name="Harris J."/>
            <person name="Honigberg L."/>
            <person name="Robinson N."/>
            <person name="Kenyon C."/>
        </authorList>
    </citation>
    <scope>FUNCTION</scope>
    <scope>DISRUPTION PHENOTYPE</scope>
</reference>
<reference key="6">
    <citation type="journal article" date="2004" name="Genetics">
        <title>The Caenorhabditis elegans Ror RTK CAM-1 inhibits EGL-20/Wnt signaling in cell migration.</title>
        <authorList>
            <person name="Forrester W.C."/>
            <person name="Kim C."/>
            <person name="Garriga G."/>
        </authorList>
    </citation>
    <scope>TISSUE SPECIFICITY</scope>
</reference>
<reference key="7">
    <citation type="journal article" date="2011" name="Development">
        <title>The C. elegans SoxC protein SEM-2 opposes differentiation factors to promote a proliferative blast cell fate in the postembryonic mesoderm.</title>
        <authorList>
            <person name="Tian C."/>
            <person name="Shi H."/>
            <person name="Colledge C."/>
            <person name="Stern M."/>
            <person name="Waterston R."/>
            <person name="Liu J."/>
        </authorList>
    </citation>
    <scope>FUNCTION</scope>
    <scope>DISRUPTION PHENOTYPE</scope>
</reference>
<reference key="8">
    <citation type="journal article" date="2013" name="Proc. Natl. Acad. Sci. U.S.A.">
        <title>Transmembrane protein MIG-13 links the Wnt signaling and Hox genes to the cell polarity in neuronal migration.</title>
        <authorList>
            <person name="Wang X."/>
            <person name="Zhou F."/>
            <person name="Lv S."/>
            <person name="Yi P."/>
            <person name="Zhu Z."/>
            <person name="Yang Y."/>
            <person name="Feng G."/>
            <person name="Li W."/>
            <person name="Ou G."/>
        </authorList>
    </citation>
    <scope>FUNCTION</scope>
</reference>
<accession>P10038</accession>
<accession>Q9GZ02</accession>
<dbReference type="EMBL" id="M22751">
    <property type="protein sequence ID" value="AAA28106.1"/>
    <property type="status" value="ALT_INIT"/>
    <property type="molecule type" value="mRNA"/>
</dbReference>
<dbReference type="EMBL" id="AF277990">
    <property type="protein sequence ID" value="AAG00458.1"/>
    <property type="molecule type" value="mRNA"/>
</dbReference>
<dbReference type="EMBL" id="FO080429">
    <property type="protein sequence ID" value="CCD63641.1"/>
    <property type="molecule type" value="Genomic_DNA"/>
</dbReference>
<dbReference type="PIR" id="S44615">
    <property type="entry name" value="S44615"/>
</dbReference>
<dbReference type="RefSeq" id="NP_498695.1">
    <property type="nucleotide sequence ID" value="NM_066294.8"/>
</dbReference>
<dbReference type="SMR" id="P10038"/>
<dbReference type="BioGRID" id="41299">
    <property type="interactions" value="10"/>
</dbReference>
<dbReference type="FunCoup" id="P10038">
    <property type="interactions" value="30"/>
</dbReference>
<dbReference type="IntAct" id="P10038">
    <property type="interactions" value="7"/>
</dbReference>
<dbReference type="STRING" id="6239.C08C3.3.1"/>
<dbReference type="PaxDb" id="6239-C08C3.3"/>
<dbReference type="PeptideAtlas" id="P10038"/>
<dbReference type="EnsemblMetazoa" id="C08C3.3.1">
    <property type="protein sequence ID" value="C08C3.3.1"/>
    <property type="gene ID" value="WBGene00003102"/>
</dbReference>
<dbReference type="GeneID" id="176091"/>
<dbReference type="KEGG" id="cel:CELE_C08C3.3"/>
<dbReference type="UCSC" id="C08C3.3">
    <property type="organism name" value="c. elegans"/>
</dbReference>
<dbReference type="AGR" id="WB:WBGene00003102"/>
<dbReference type="CTD" id="176091"/>
<dbReference type="WormBase" id="C08C3.3">
    <property type="protein sequence ID" value="CE25765"/>
    <property type="gene ID" value="WBGene00003102"/>
    <property type="gene designation" value="mab-5"/>
</dbReference>
<dbReference type="eggNOG" id="KOG0489">
    <property type="taxonomic scope" value="Eukaryota"/>
</dbReference>
<dbReference type="GeneTree" id="ENSGT00940000171134"/>
<dbReference type="HOGENOM" id="CLU_061398_1_1_1"/>
<dbReference type="InParanoid" id="P10038"/>
<dbReference type="OMA" id="MSMYPGW"/>
<dbReference type="OrthoDB" id="6159439at2759"/>
<dbReference type="PhylomeDB" id="P10038"/>
<dbReference type="SignaLink" id="P10038"/>
<dbReference type="PRO" id="PR:P10038"/>
<dbReference type="Proteomes" id="UP000001940">
    <property type="component" value="Chromosome III"/>
</dbReference>
<dbReference type="Bgee" id="WBGene00003102">
    <property type="expression patterns" value="Expressed in V5L.p (C elegans) and 8 other cell types or tissues"/>
</dbReference>
<dbReference type="GO" id="GO:0005654">
    <property type="term" value="C:nucleoplasm"/>
    <property type="evidence" value="ECO:0000318"/>
    <property type="project" value="GO_Central"/>
</dbReference>
<dbReference type="GO" id="GO:0005634">
    <property type="term" value="C:nucleus"/>
    <property type="evidence" value="ECO:0000314"/>
    <property type="project" value="WormBase"/>
</dbReference>
<dbReference type="GO" id="GO:0090575">
    <property type="term" value="C:RNA polymerase II transcription regulator complex"/>
    <property type="evidence" value="ECO:0000314"/>
    <property type="project" value="WormBase"/>
</dbReference>
<dbReference type="GO" id="GO:0000981">
    <property type="term" value="F:DNA-binding transcription factor activity, RNA polymerase II-specific"/>
    <property type="evidence" value="ECO:0000318"/>
    <property type="project" value="GO_Central"/>
</dbReference>
<dbReference type="GO" id="GO:0000978">
    <property type="term" value="F:RNA polymerase II cis-regulatory region sequence-specific DNA binding"/>
    <property type="evidence" value="ECO:0000318"/>
    <property type="project" value="GO_Central"/>
</dbReference>
<dbReference type="GO" id="GO:0009952">
    <property type="term" value="P:anterior/posterior pattern specification"/>
    <property type="evidence" value="ECO:0000315"/>
    <property type="project" value="WormBase"/>
</dbReference>
<dbReference type="GO" id="GO:0000122">
    <property type="term" value="P:negative regulation of transcription by RNA polymerase II"/>
    <property type="evidence" value="ECO:0000315"/>
    <property type="project" value="WormBase"/>
</dbReference>
<dbReference type="GO" id="GO:0090597">
    <property type="term" value="P:nematode male tail mating organ morphogenesis"/>
    <property type="evidence" value="ECO:0000315"/>
    <property type="project" value="WormBase"/>
</dbReference>
<dbReference type="GO" id="GO:0097402">
    <property type="term" value="P:neuroblast migration"/>
    <property type="evidence" value="ECO:0000316"/>
    <property type="project" value="UniProtKB"/>
</dbReference>
<dbReference type="GO" id="GO:0050679">
    <property type="term" value="P:positive regulation of epithelial cell proliferation"/>
    <property type="evidence" value="ECO:0000315"/>
    <property type="project" value="WormBase"/>
</dbReference>
<dbReference type="GO" id="GO:0048337">
    <property type="term" value="P:positive regulation of mesodermal cell fate specification"/>
    <property type="evidence" value="ECO:0000316"/>
    <property type="project" value="UniProtKB"/>
</dbReference>
<dbReference type="GO" id="GO:0045944">
    <property type="term" value="P:positive regulation of transcription by RNA polymerase II"/>
    <property type="evidence" value="ECO:0000315"/>
    <property type="project" value="WormBase"/>
</dbReference>
<dbReference type="GO" id="GO:0042659">
    <property type="term" value="P:regulation of cell fate specification"/>
    <property type="evidence" value="ECO:0000315"/>
    <property type="project" value="WormBase"/>
</dbReference>
<dbReference type="GO" id="GO:0030334">
    <property type="term" value="P:regulation of cell migration"/>
    <property type="evidence" value="ECO:0000315"/>
    <property type="project" value="WormBase"/>
</dbReference>
<dbReference type="CDD" id="cd00086">
    <property type="entry name" value="homeodomain"/>
    <property type="match status" value="1"/>
</dbReference>
<dbReference type="FunFam" id="1.10.10.60:FF:000398">
    <property type="entry name" value="Homeobox protein lin-39"/>
    <property type="match status" value="1"/>
</dbReference>
<dbReference type="Gene3D" id="1.10.10.60">
    <property type="entry name" value="Homeodomain-like"/>
    <property type="match status" value="1"/>
</dbReference>
<dbReference type="InterPro" id="IPR050296">
    <property type="entry name" value="Antp_homeobox"/>
</dbReference>
<dbReference type="InterPro" id="IPR001356">
    <property type="entry name" value="HD"/>
</dbReference>
<dbReference type="InterPro" id="IPR020479">
    <property type="entry name" value="HD_metazoa"/>
</dbReference>
<dbReference type="InterPro" id="IPR001827">
    <property type="entry name" value="Homeobox_Antennapedia_CS"/>
</dbReference>
<dbReference type="InterPro" id="IPR017970">
    <property type="entry name" value="Homeobox_CS"/>
</dbReference>
<dbReference type="InterPro" id="IPR009057">
    <property type="entry name" value="Homeodomain-like_sf"/>
</dbReference>
<dbReference type="PANTHER" id="PTHR45659:SF4">
    <property type="entry name" value="HOMEOBOX PROTEIN ABDOMINAL-A"/>
    <property type="match status" value="1"/>
</dbReference>
<dbReference type="PANTHER" id="PTHR45659">
    <property type="entry name" value="HOMEOBOX PROTEIN HOX"/>
    <property type="match status" value="1"/>
</dbReference>
<dbReference type="Pfam" id="PF00046">
    <property type="entry name" value="Homeodomain"/>
    <property type="match status" value="1"/>
</dbReference>
<dbReference type="PRINTS" id="PR00024">
    <property type="entry name" value="HOMEOBOX"/>
</dbReference>
<dbReference type="SMART" id="SM00389">
    <property type="entry name" value="HOX"/>
    <property type="match status" value="1"/>
</dbReference>
<dbReference type="SUPFAM" id="SSF46689">
    <property type="entry name" value="Homeodomain-like"/>
    <property type="match status" value="1"/>
</dbReference>
<dbReference type="PROSITE" id="PS00032">
    <property type="entry name" value="ANTENNAPEDIA"/>
    <property type="match status" value="1"/>
</dbReference>
<dbReference type="PROSITE" id="PS00027">
    <property type="entry name" value="HOMEOBOX_1"/>
    <property type="match status" value="1"/>
</dbReference>
<dbReference type="PROSITE" id="PS50071">
    <property type="entry name" value="HOMEOBOX_2"/>
    <property type="match status" value="1"/>
</dbReference>
<organism>
    <name type="scientific">Caenorhabditis elegans</name>
    <dbReference type="NCBI Taxonomy" id="6239"/>
    <lineage>
        <taxon>Eukaryota</taxon>
        <taxon>Metazoa</taxon>
        <taxon>Ecdysozoa</taxon>
        <taxon>Nematoda</taxon>
        <taxon>Chromadorea</taxon>
        <taxon>Rhabditida</taxon>
        <taxon>Rhabditina</taxon>
        <taxon>Rhabditomorpha</taxon>
        <taxon>Rhabditoidea</taxon>
        <taxon>Rhabditidae</taxon>
        <taxon>Peloderinae</taxon>
        <taxon>Caenorhabditis</taxon>
    </lineage>
</organism>
<protein>
    <recommendedName>
        <fullName>Homeobox protein mab-5</fullName>
    </recommendedName>
    <alternativeName>
        <fullName>Protein male abnormal 5</fullName>
    </alternativeName>
</protein>
<sequence length="200" mass="22399">MSMYPGWTGDDSYWAGAGTTASSQSASSGTSASASSSAAAAAAANNLKTYELYNHTYMNNMKHMLAAGWMDNSSNPFAYNPLQATSANFGETRTSMPAISQPVFPWMKMGGAKGGESKRTRQTYSRSQTLELEKEFHYHKYLTRKRRQEISETLHLTERQVKIWFQNRRMKHKKEAKGEGGSNESDEESNQDEQNEQHSS</sequence>
<feature type="chain" id="PRO_0000049171" description="Homeobox protein mab-5">
    <location>
        <begin position="1"/>
        <end position="200"/>
    </location>
</feature>
<feature type="DNA-binding region" description="Homeobox" evidence="1">
    <location>
        <begin position="115"/>
        <end position="175"/>
    </location>
</feature>
<feature type="region of interest" description="Disordered" evidence="2">
    <location>
        <begin position="164"/>
        <end position="200"/>
    </location>
</feature>
<feature type="short sequence motif" description="Antp-type hexapeptide">
    <location>
        <begin position="103"/>
        <end position="108"/>
    </location>
</feature>
<feature type="compositionally biased region" description="Acidic residues" evidence="2">
    <location>
        <begin position="184"/>
        <end position="194"/>
    </location>
</feature>
<comment type="function">
    <text evidence="4 5 6 7">Transcription factor that binds to the promoter region of the transcription factor lin-39 to repress its expression in Q neuroblasts and thereby direct left Q neuroblast (QL) daughter cell migration (PubMed:23784779, PubMed:8898225). During postembryonic development, required for posterior-specific pattern formation (PubMed:2903796). Within the posterior body region, controls epidermal, neuronal, and mesodermal cell differentiation (PubMed:21307099, PubMed:2903796).</text>
</comment>
<comment type="subcellular location">
    <subcellularLocation>
        <location evidence="8">Nucleus</location>
    </subcellularLocation>
</comment>
<comment type="tissue specificity">
    <text evidence="3">Expressed asymmetrically in the QL neuroblast.</text>
</comment>
<comment type="disruption phenotype">
    <text evidence="4 7">Defective QL neuroblast daughter cell migration (PubMed:8898225). Lin-39 and mab-5 double mutants have reduced sex myoblast specific expression of sem-2 in the developing mesoderm (PubMed:21307099).</text>
</comment>
<comment type="similarity">
    <text evidence="8">Belongs to the Antp homeobox family.</text>
</comment>
<comment type="sequence caution" evidence="8">
    <conflict type="erroneous initiation">
        <sequence resource="EMBL-CDS" id="AAA28106"/>
    </conflict>
</comment>
<evidence type="ECO:0000255" key="1">
    <source>
        <dbReference type="PROSITE-ProRule" id="PRU00108"/>
    </source>
</evidence>
<evidence type="ECO:0000256" key="2">
    <source>
        <dbReference type="SAM" id="MobiDB-lite"/>
    </source>
</evidence>
<evidence type="ECO:0000269" key="3">
    <source>
    </source>
</evidence>
<evidence type="ECO:0000269" key="4">
    <source>
    </source>
</evidence>
<evidence type="ECO:0000269" key="5">
    <source>
    </source>
</evidence>
<evidence type="ECO:0000269" key="6">
    <source>
    </source>
</evidence>
<evidence type="ECO:0000269" key="7">
    <source>
    </source>
</evidence>
<evidence type="ECO:0000305" key="8"/>
<evidence type="ECO:0000312" key="9">
    <source>
        <dbReference type="WormBase" id="C08C3.3"/>
    </source>
</evidence>
<proteinExistence type="evidence at transcript level"/>
<gene>
    <name evidence="9" type="primary">mab-5</name>
    <name evidence="9" type="ORF">C08C3.3</name>
</gene>
<keyword id="KW-0217">Developmental protein</keyword>
<keyword id="KW-0238">DNA-binding</keyword>
<keyword id="KW-0371">Homeobox</keyword>
<keyword id="KW-0539">Nucleus</keyword>
<keyword id="KW-1185">Reference proteome</keyword>
<keyword id="KW-0678">Repressor</keyword>
<keyword id="KW-0804">Transcription</keyword>
<keyword id="KW-0805">Transcription regulation</keyword>
<name>MAB5_CAEEL</name>